<evidence type="ECO:0000255" key="1"/>
<evidence type="ECO:0000255" key="2">
    <source>
        <dbReference type="PROSITE-ProRule" id="PRU00159"/>
    </source>
</evidence>
<evidence type="ECO:0000255" key="3">
    <source>
        <dbReference type="PROSITE-ProRule" id="PRU00565"/>
    </source>
</evidence>
<evidence type="ECO:0000255" key="4">
    <source>
        <dbReference type="PROSITE-ProRule" id="PRU10027"/>
    </source>
</evidence>
<evidence type="ECO:0000256" key="5">
    <source>
        <dbReference type="SAM" id="MobiDB-lite"/>
    </source>
</evidence>
<evidence type="ECO:0000269" key="6">
    <source>
    </source>
</evidence>
<evidence type="ECO:0000305" key="7"/>
<comment type="function">
    <text evidence="6">Activated enzyme phosphorylates target proteins and initiates downstream signaling pathways that shift metabolism from anabolic to catabolic pathways. Acts as a highly sensitive cellular energy sensor.</text>
</comment>
<comment type="catalytic activity">
    <reaction>
        <text>L-seryl-[protein] + ATP = O-phospho-L-seryl-[protein] + ADP + H(+)</text>
        <dbReference type="Rhea" id="RHEA:17989"/>
        <dbReference type="Rhea" id="RHEA-COMP:9863"/>
        <dbReference type="Rhea" id="RHEA-COMP:11604"/>
        <dbReference type="ChEBI" id="CHEBI:15378"/>
        <dbReference type="ChEBI" id="CHEBI:29999"/>
        <dbReference type="ChEBI" id="CHEBI:30616"/>
        <dbReference type="ChEBI" id="CHEBI:83421"/>
        <dbReference type="ChEBI" id="CHEBI:456216"/>
        <dbReference type="EC" id="2.7.11.1"/>
    </reaction>
</comment>
<comment type="catalytic activity">
    <reaction>
        <text>L-threonyl-[protein] + ATP = O-phospho-L-threonyl-[protein] + ADP + H(+)</text>
        <dbReference type="Rhea" id="RHEA:46608"/>
        <dbReference type="Rhea" id="RHEA-COMP:11060"/>
        <dbReference type="Rhea" id="RHEA-COMP:11605"/>
        <dbReference type="ChEBI" id="CHEBI:15378"/>
        <dbReference type="ChEBI" id="CHEBI:30013"/>
        <dbReference type="ChEBI" id="CHEBI:30616"/>
        <dbReference type="ChEBI" id="CHEBI:61977"/>
        <dbReference type="ChEBI" id="CHEBI:456216"/>
        <dbReference type="EC" id="2.7.11.1"/>
    </reaction>
</comment>
<comment type="subunit">
    <text evidence="7">Heterotrimer of an alpha catalytic subunit, a beta and a gamma non-catalytic subunits.</text>
</comment>
<comment type="developmental stage">
    <text evidence="6">Expressed throughout development. Levels may increase during the first 5 hours of starvation-induced differentiation.</text>
</comment>
<comment type="similarity">
    <text evidence="7">Belongs to the protein kinase superfamily. CAMK Ser/Thr protein kinase family. SNF1 subfamily.</text>
</comment>
<comment type="sequence caution" evidence="7">
    <conflict type="frameshift">
        <sequence resource="EMBL-CDS" id="AAD30963"/>
    </conflict>
</comment>
<dbReference type="EC" id="2.7.11.1"/>
<dbReference type="EMBL" id="AF118151">
    <property type="protein sequence ID" value="AAD30963.2"/>
    <property type="status" value="ALT_FRAME"/>
    <property type="molecule type" value="Genomic_DNA"/>
</dbReference>
<dbReference type="EMBL" id="AAFI02000023">
    <property type="protein sequence ID" value="EAL68125.1"/>
    <property type="molecule type" value="Genomic_DNA"/>
</dbReference>
<dbReference type="RefSeq" id="XP_642250.1">
    <property type="nucleotide sequence ID" value="XM_637158.1"/>
</dbReference>
<dbReference type="SMR" id="Q54YF2"/>
<dbReference type="FunCoup" id="Q54YF2">
    <property type="interactions" value="533"/>
</dbReference>
<dbReference type="STRING" id="44689.Q54YF2"/>
<dbReference type="PaxDb" id="44689-DDB0215396"/>
<dbReference type="EnsemblProtists" id="EAL68125">
    <property type="protein sequence ID" value="EAL68125"/>
    <property type="gene ID" value="DDB_G0277905"/>
</dbReference>
<dbReference type="GeneID" id="8621459"/>
<dbReference type="KEGG" id="ddi:DDB_G0277905"/>
<dbReference type="dictyBase" id="DDB_G0277905">
    <property type="gene designation" value="snfA"/>
</dbReference>
<dbReference type="VEuPathDB" id="AmoebaDB:DDB_G0277905"/>
<dbReference type="eggNOG" id="KOG0583">
    <property type="taxonomic scope" value="Eukaryota"/>
</dbReference>
<dbReference type="HOGENOM" id="CLU_000288_59_3_1"/>
<dbReference type="InParanoid" id="Q54YF2"/>
<dbReference type="OMA" id="DFCSHSV"/>
<dbReference type="PhylomeDB" id="Q54YF2"/>
<dbReference type="Reactome" id="R-DDI-1632852">
    <property type="pathway name" value="Macroautophagy"/>
</dbReference>
<dbReference type="Reactome" id="R-DDI-163680">
    <property type="pathway name" value="AMPK inhibits chREBP transcriptional activation activity"/>
</dbReference>
<dbReference type="Reactome" id="R-DDI-200425">
    <property type="pathway name" value="Carnitine shuttle"/>
</dbReference>
<dbReference type="Reactome" id="R-DDI-380972">
    <property type="pathway name" value="Energy dependent regulation of mTOR by LKB1-AMPK"/>
</dbReference>
<dbReference type="Reactome" id="R-DDI-5628897">
    <property type="pathway name" value="TP53 Regulates Metabolic Genes"/>
</dbReference>
<dbReference type="PRO" id="PR:Q54YF2"/>
<dbReference type="Proteomes" id="UP000002195">
    <property type="component" value="Chromosome 3"/>
</dbReference>
<dbReference type="GO" id="GO:0030139">
    <property type="term" value="C:endocytic vesicle"/>
    <property type="evidence" value="ECO:0000314"/>
    <property type="project" value="dictyBase"/>
</dbReference>
<dbReference type="GO" id="GO:0004679">
    <property type="term" value="F:AMP-activated protein kinase activity"/>
    <property type="evidence" value="ECO:0000250"/>
    <property type="project" value="dictyBase"/>
</dbReference>
<dbReference type="GO" id="GO:0005524">
    <property type="term" value="F:ATP binding"/>
    <property type="evidence" value="ECO:0007669"/>
    <property type="project" value="UniProtKB-KW"/>
</dbReference>
<dbReference type="GO" id="GO:0106310">
    <property type="term" value="F:protein serine kinase activity"/>
    <property type="evidence" value="ECO:0007669"/>
    <property type="project" value="RHEA"/>
</dbReference>
<dbReference type="GO" id="GO:0004674">
    <property type="term" value="F:protein serine/threonine kinase activity"/>
    <property type="evidence" value="ECO:0000318"/>
    <property type="project" value="GO_Central"/>
</dbReference>
<dbReference type="GO" id="GO:0019954">
    <property type="term" value="P:asexual reproduction"/>
    <property type="evidence" value="ECO:0000315"/>
    <property type="project" value="dictyBase"/>
</dbReference>
<dbReference type="GO" id="GO:0006754">
    <property type="term" value="P:ATP biosynthetic process"/>
    <property type="evidence" value="ECO:0000315"/>
    <property type="project" value="dictyBase"/>
</dbReference>
<dbReference type="GO" id="GO:0006914">
    <property type="term" value="P:autophagy"/>
    <property type="evidence" value="ECO:0000315"/>
    <property type="project" value="dictyBase"/>
</dbReference>
<dbReference type="GO" id="GO:1904630">
    <property type="term" value="P:cellular response to diterpene"/>
    <property type="evidence" value="ECO:0000315"/>
    <property type="project" value="dictyBase"/>
</dbReference>
<dbReference type="GO" id="GO:0007005">
    <property type="term" value="P:mitochondrion organization"/>
    <property type="evidence" value="ECO:0000315"/>
    <property type="project" value="dictyBase"/>
</dbReference>
<dbReference type="GO" id="GO:1903665">
    <property type="term" value="P:negative regulation of asexual reproduction"/>
    <property type="evidence" value="ECO:0000315"/>
    <property type="project" value="dictyBase"/>
</dbReference>
<dbReference type="GO" id="GO:0010629">
    <property type="term" value="P:negative regulation of gene expression"/>
    <property type="evidence" value="ECO:0000315"/>
    <property type="project" value="dictyBase"/>
</dbReference>
<dbReference type="GO" id="GO:0006909">
    <property type="term" value="P:phagocytosis"/>
    <property type="evidence" value="ECO:0000315"/>
    <property type="project" value="dictyBase"/>
</dbReference>
<dbReference type="GO" id="GO:0006907">
    <property type="term" value="P:pinocytosis"/>
    <property type="evidence" value="ECO:0000315"/>
    <property type="project" value="dictyBase"/>
</dbReference>
<dbReference type="GO" id="GO:0046956">
    <property type="term" value="P:positive phototaxis"/>
    <property type="evidence" value="ECO:0000315"/>
    <property type="project" value="dictyBase"/>
</dbReference>
<dbReference type="GO" id="GO:0010628">
    <property type="term" value="P:positive regulation of gene expression"/>
    <property type="evidence" value="ECO:0000315"/>
    <property type="project" value="dictyBase"/>
</dbReference>
<dbReference type="GO" id="GO:0006468">
    <property type="term" value="P:protein phosphorylation"/>
    <property type="evidence" value="ECO:0000250"/>
    <property type="project" value="dictyBase"/>
</dbReference>
<dbReference type="GO" id="GO:0060176">
    <property type="term" value="P:regulation of aggregation involved in sorocarp development"/>
    <property type="evidence" value="ECO:0000315"/>
    <property type="project" value="dictyBase"/>
</dbReference>
<dbReference type="GO" id="GO:1901261">
    <property type="term" value="P:regulation of sorocarp spore cell differentiation"/>
    <property type="evidence" value="ECO:0000315"/>
    <property type="project" value="dictyBase"/>
</dbReference>
<dbReference type="GO" id="GO:0031285">
    <property type="term" value="P:regulation of sorocarp stalk cell differentiation"/>
    <property type="evidence" value="ECO:0000315"/>
    <property type="project" value="dictyBase"/>
</dbReference>
<dbReference type="CDD" id="cd12122">
    <property type="entry name" value="AMPKA_C"/>
    <property type="match status" value="1"/>
</dbReference>
<dbReference type="CDD" id="cd14079">
    <property type="entry name" value="STKc_AMPK_alpha"/>
    <property type="match status" value="1"/>
</dbReference>
<dbReference type="FunFam" id="1.10.510.10:FF:000544">
    <property type="entry name" value="Non-specific serine/threonine protein kinase"/>
    <property type="match status" value="1"/>
</dbReference>
<dbReference type="FunFam" id="3.30.200.20:FF:000236">
    <property type="entry name" value="Non-specific serine/threonine protein kinase"/>
    <property type="match status" value="1"/>
</dbReference>
<dbReference type="Gene3D" id="3.30.310.80">
    <property type="entry name" value="Kinase associated domain 1, KA1"/>
    <property type="match status" value="1"/>
</dbReference>
<dbReference type="Gene3D" id="1.10.510.10">
    <property type="entry name" value="Transferase(Phosphotransferase) domain 1"/>
    <property type="match status" value="1"/>
</dbReference>
<dbReference type="InterPro" id="IPR032270">
    <property type="entry name" value="AMPK_C"/>
</dbReference>
<dbReference type="InterPro" id="IPR028375">
    <property type="entry name" value="KA1/Ssp2_C"/>
</dbReference>
<dbReference type="InterPro" id="IPR001772">
    <property type="entry name" value="KA1_dom"/>
</dbReference>
<dbReference type="InterPro" id="IPR011009">
    <property type="entry name" value="Kinase-like_dom_sf"/>
</dbReference>
<dbReference type="InterPro" id="IPR000719">
    <property type="entry name" value="Prot_kinase_dom"/>
</dbReference>
<dbReference type="InterPro" id="IPR017441">
    <property type="entry name" value="Protein_kinase_ATP_BS"/>
</dbReference>
<dbReference type="InterPro" id="IPR008271">
    <property type="entry name" value="Ser/Thr_kinase_AS"/>
</dbReference>
<dbReference type="PANTHER" id="PTHR24346">
    <property type="entry name" value="MAP/MICROTUBULE AFFINITY-REGULATING KINASE"/>
    <property type="match status" value="1"/>
</dbReference>
<dbReference type="PANTHER" id="PTHR24346:SF110">
    <property type="entry name" value="NON-SPECIFIC SERINE_THREONINE PROTEIN KINASE"/>
    <property type="match status" value="1"/>
</dbReference>
<dbReference type="Pfam" id="PF16579">
    <property type="entry name" value="AdenylateSensor"/>
    <property type="match status" value="1"/>
</dbReference>
<dbReference type="Pfam" id="PF00069">
    <property type="entry name" value="Pkinase"/>
    <property type="match status" value="1"/>
</dbReference>
<dbReference type="SMART" id="SM00220">
    <property type="entry name" value="S_TKc"/>
    <property type="match status" value="1"/>
</dbReference>
<dbReference type="SUPFAM" id="SSF103243">
    <property type="entry name" value="KA1-like"/>
    <property type="match status" value="1"/>
</dbReference>
<dbReference type="SUPFAM" id="SSF56112">
    <property type="entry name" value="Protein kinase-like (PK-like)"/>
    <property type="match status" value="1"/>
</dbReference>
<dbReference type="PROSITE" id="PS50032">
    <property type="entry name" value="KA1"/>
    <property type="match status" value="1"/>
</dbReference>
<dbReference type="PROSITE" id="PS00107">
    <property type="entry name" value="PROTEIN_KINASE_ATP"/>
    <property type="match status" value="1"/>
</dbReference>
<dbReference type="PROSITE" id="PS50011">
    <property type="entry name" value="PROTEIN_KINASE_DOM"/>
    <property type="match status" value="1"/>
</dbReference>
<dbReference type="PROSITE" id="PS00108">
    <property type="entry name" value="PROTEIN_KINASE_ST"/>
    <property type="match status" value="1"/>
</dbReference>
<accession>Q54YF2</accession>
<accession>Q9XYP6</accession>
<organism>
    <name type="scientific">Dictyostelium discoideum</name>
    <name type="common">Social amoeba</name>
    <dbReference type="NCBI Taxonomy" id="44689"/>
    <lineage>
        <taxon>Eukaryota</taxon>
        <taxon>Amoebozoa</taxon>
        <taxon>Evosea</taxon>
        <taxon>Eumycetozoa</taxon>
        <taxon>Dictyostelia</taxon>
        <taxon>Dictyosteliales</taxon>
        <taxon>Dictyosteliaceae</taxon>
        <taxon>Dictyostelium</taxon>
    </lineage>
</organism>
<feature type="chain" id="PRO_0000358880" description="5'-AMP-activated serine/threonine-protein kinase catalytic subunit alpha">
    <location>
        <begin position="1"/>
        <end position="727"/>
    </location>
</feature>
<feature type="domain" description="Protein kinase" evidence="2">
    <location>
        <begin position="31"/>
        <end position="284"/>
    </location>
</feature>
<feature type="domain" description="KA1" evidence="3">
    <location>
        <begin position="679"/>
        <end position="727"/>
    </location>
</feature>
<feature type="region of interest" description="Disordered" evidence="5">
    <location>
        <begin position="382"/>
        <end position="590"/>
    </location>
</feature>
<feature type="compositionally biased region" description="Low complexity" evidence="5">
    <location>
        <begin position="391"/>
        <end position="483"/>
    </location>
</feature>
<feature type="compositionally biased region" description="Low complexity" evidence="5">
    <location>
        <begin position="494"/>
        <end position="586"/>
    </location>
</feature>
<feature type="active site" description="Proton acceptor" evidence="2 4">
    <location>
        <position position="154"/>
    </location>
</feature>
<feature type="binding site" evidence="2">
    <location>
        <begin position="37"/>
        <end position="45"/>
    </location>
    <ligand>
        <name>ATP</name>
        <dbReference type="ChEBI" id="CHEBI:30616"/>
    </ligand>
</feature>
<feature type="binding site" evidence="2">
    <location>
        <position position="60"/>
    </location>
    <ligand>
        <name>ATP</name>
        <dbReference type="ChEBI" id="CHEBI:30616"/>
    </ligand>
</feature>
<feature type="modified residue" description="Phosphothreonine" evidence="1">
    <location>
        <position position="188"/>
    </location>
</feature>
<feature type="sequence conflict" description="In Ref. 1; AAD30963." evidence="7" ref="1">
    <original>S</original>
    <variation>P</variation>
    <location>
        <position position="3"/>
    </location>
</feature>
<feature type="sequence conflict" description="In Ref. 1; AAD30963." evidence="7" ref="1">
    <original>F</original>
    <variation>L</variation>
    <location>
        <position position="12"/>
    </location>
</feature>
<feature type="sequence conflict" description="In Ref. 1; AAD30963." evidence="7" ref="1">
    <original>E</original>
    <variation>K</variation>
    <location>
        <position position="49"/>
    </location>
</feature>
<feature type="sequence conflict" description="In Ref. 1; AAD30963." evidence="7" ref="1">
    <original>R</original>
    <variation>K</variation>
    <location>
        <position position="64"/>
    </location>
</feature>
<feature type="sequence conflict" description="In Ref. 1; AAD30963." evidence="7" ref="1">
    <original>IIK</original>
    <variation>FIN</variation>
    <location>
        <begin position="91"/>
        <end position="93"/>
    </location>
</feature>
<feature type="sequence conflict" description="In Ref. 1; AAD30963." evidence="7" ref="1">
    <original>F</original>
    <variation>P</variation>
    <location>
        <position position="105"/>
    </location>
</feature>
<feature type="sequence conflict" description="In Ref. 1; AAD30963." evidence="7" ref="1">
    <original>T</original>
    <variation>P</variation>
    <location>
        <position position="112"/>
    </location>
</feature>
<feature type="sequence conflict" description="In Ref. 1; AAD30963." evidence="7" ref="1">
    <original>FE</original>
    <variation>LD</variation>
    <location>
        <begin position="117"/>
        <end position="118"/>
    </location>
</feature>
<feature type="sequence conflict" description="In Ref. 1; AAD30963." evidence="7" ref="1">
    <original>K</original>
    <variation>R</variation>
    <location>
        <position position="122"/>
    </location>
</feature>
<feature type="sequence conflict" description="In Ref. 1; AAD30963." evidence="7" ref="1">
    <original>K</original>
    <variation>N</variation>
    <location>
        <position position="125"/>
    </location>
</feature>
<feature type="sequence conflict" description="In Ref. 1; AAD30963." evidence="7" ref="1">
    <original>L</original>
    <variation>P</variation>
    <location>
        <position position="134"/>
    </location>
</feature>
<feature type="sequence conflict" description="In Ref. 1; AAD30963." evidence="7" ref="1">
    <original>D</original>
    <variation>G</variation>
    <location>
        <position position="143"/>
    </location>
</feature>
<feature type="sequence conflict" description="In Ref. 1; AAD30963." evidence="7" ref="1">
    <original>EE</original>
    <variation>GG</variation>
    <location>
        <begin position="328"/>
        <end position="329"/>
    </location>
</feature>
<feature type="sequence conflict" description="In Ref. 1; AAD30963." evidence="7" ref="1">
    <original>ENEIN</original>
    <variation>DDEVY</variation>
    <location>
        <begin position="355"/>
        <end position="359"/>
    </location>
</feature>
<feature type="sequence conflict" description="In Ref. 1; AAD30963." evidence="7" ref="1">
    <original>QKS</original>
    <variation>PQR</variation>
    <location>
        <begin position="376"/>
        <end position="378"/>
    </location>
</feature>
<feature type="sequence conflict" description="In Ref. 1; AAD30963." evidence="7" ref="1">
    <original>S</original>
    <variation>T</variation>
    <location>
        <position position="391"/>
    </location>
</feature>
<feature type="sequence conflict" description="In Ref. 1; AAD30963." evidence="7" ref="1">
    <location>
        <position position="453"/>
    </location>
</feature>
<proteinExistence type="evidence at transcript level"/>
<reference key="1">
    <citation type="submission" date="1999-06" db="EMBL/GenBank/DDBJ databases">
        <title>The Dictyostelium SNF1/AMP-activated kinase.</title>
        <authorList>
            <person name="Sung S."/>
            <person name="Bisson S."/>
            <person name="Koehler S."/>
            <person name="Podgorski G.J."/>
        </authorList>
    </citation>
    <scope>NUCLEOTIDE SEQUENCE [GENOMIC DNA]</scope>
    <source>
        <strain>AX3</strain>
    </source>
</reference>
<reference key="2">
    <citation type="journal article" date="2005" name="Nature">
        <title>The genome of the social amoeba Dictyostelium discoideum.</title>
        <authorList>
            <person name="Eichinger L."/>
            <person name="Pachebat J.A."/>
            <person name="Gloeckner G."/>
            <person name="Rajandream M.A."/>
            <person name="Sucgang R."/>
            <person name="Berriman M."/>
            <person name="Song J."/>
            <person name="Olsen R."/>
            <person name="Szafranski K."/>
            <person name="Xu Q."/>
            <person name="Tunggal B."/>
            <person name="Kummerfeld S."/>
            <person name="Madera M."/>
            <person name="Konfortov B.A."/>
            <person name="Rivero F."/>
            <person name="Bankier A.T."/>
            <person name="Lehmann R."/>
            <person name="Hamlin N."/>
            <person name="Davies R."/>
            <person name="Gaudet P."/>
            <person name="Fey P."/>
            <person name="Pilcher K."/>
            <person name="Chen G."/>
            <person name="Saunders D."/>
            <person name="Sodergren E.J."/>
            <person name="Davis P."/>
            <person name="Kerhornou A."/>
            <person name="Nie X."/>
            <person name="Hall N."/>
            <person name="Anjard C."/>
            <person name="Hemphill L."/>
            <person name="Bason N."/>
            <person name="Farbrother P."/>
            <person name="Desany B."/>
            <person name="Just E."/>
            <person name="Morio T."/>
            <person name="Rost R."/>
            <person name="Churcher C.M."/>
            <person name="Cooper J."/>
            <person name="Haydock S."/>
            <person name="van Driessche N."/>
            <person name="Cronin A."/>
            <person name="Goodhead I."/>
            <person name="Muzny D.M."/>
            <person name="Mourier T."/>
            <person name="Pain A."/>
            <person name="Lu M."/>
            <person name="Harper D."/>
            <person name="Lindsay R."/>
            <person name="Hauser H."/>
            <person name="James K.D."/>
            <person name="Quiles M."/>
            <person name="Madan Babu M."/>
            <person name="Saito T."/>
            <person name="Buchrieser C."/>
            <person name="Wardroper A."/>
            <person name="Felder M."/>
            <person name="Thangavelu M."/>
            <person name="Johnson D."/>
            <person name="Knights A."/>
            <person name="Loulseged H."/>
            <person name="Mungall K.L."/>
            <person name="Oliver K."/>
            <person name="Price C."/>
            <person name="Quail M.A."/>
            <person name="Urushihara H."/>
            <person name="Hernandez J."/>
            <person name="Rabbinowitsch E."/>
            <person name="Steffen D."/>
            <person name="Sanders M."/>
            <person name="Ma J."/>
            <person name="Kohara Y."/>
            <person name="Sharp S."/>
            <person name="Simmonds M.N."/>
            <person name="Spiegler S."/>
            <person name="Tivey A."/>
            <person name="Sugano S."/>
            <person name="White B."/>
            <person name="Walker D."/>
            <person name="Woodward J.R."/>
            <person name="Winckler T."/>
            <person name="Tanaka Y."/>
            <person name="Shaulsky G."/>
            <person name="Schleicher M."/>
            <person name="Weinstock G.M."/>
            <person name="Rosenthal A."/>
            <person name="Cox E.C."/>
            <person name="Chisholm R.L."/>
            <person name="Gibbs R.A."/>
            <person name="Loomis W.F."/>
            <person name="Platzer M."/>
            <person name="Kay R.R."/>
            <person name="Williams J.G."/>
            <person name="Dear P.H."/>
            <person name="Noegel A.A."/>
            <person name="Barrell B.G."/>
            <person name="Kuspa A."/>
        </authorList>
    </citation>
    <scope>NUCLEOTIDE SEQUENCE [LARGE SCALE GENOMIC DNA]</scope>
    <source>
        <strain>AX4</strain>
    </source>
</reference>
<reference key="3">
    <citation type="journal article" date="2007" name="Mol. Biol. Cell">
        <title>Diverse cytopathologies in mitochondrial disease are caused by AMP-activated protein kinase signaling.</title>
        <authorList>
            <person name="Bokko P.B."/>
            <person name="Francione L."/>
            <person name="Bandala-Sanchez E."/>
            <person name="Ahmed A.U."/>
            <person name="Annesley S.J."/>
            <person name="Huang X."/>
            <person name="Khurana T."/>
            <person name="Kimmel A.R."/>
            <person name="Fisher P.R."/>
        </authorList>
    </citation>
    <scope>FUNCTION</scope>
    <scope>DEVELOPMENTAL STAGE</scope>
</reference>
<sequence length="727" mass="81639">MSSYQQNPIGSFGGLYGSGGIEKSSQIIGNYRLDKTLGIGSFGKVKLAEHIRTGVKVAIKILNRTKIKNLKMDEKIRREIQNMKLFRHPHIIKLYEVIETTTDIFMVMEYVTGGELFEYIVKNGKLLEDESRRLFQQMISGVDYCHHHMVVHRDLKPENLLLDPINKCIKIADFGLSNMMQDGDFLKTSCGSPNYAAPEVISGKLYAGPEVDVWSCGVILYAFLCAKLPFDDESIPMLFKKIREGVFSIPDFVSPSCADLIKKMLVVDPVKRITIHEIRNHPWFQVKLPKYLSSPHTFLSKSIQTINNSILNEMVQVYAPIDRERIIEELQKSGEVNDLIVSYHLLVDSKRGSYENEINSPNLVSPITTPIMSSAQKSPIMFTTTTGFNPSNSNSISNNNNNNNNNNNNTTNNNNNTTNNNNSIINNNNINNNNINNNNNNNNNNINNNNIINNNNNNNNNNNNNNNNNNNNNNNNNNNSSISGGTEVFSISPNLNNSYNSNSSGNSNGSNSNNNSNNNTNNDNNNNNNNNNNNNNNNNNNNNNNNNNNNCIDSVNNSLNNENDVNNSNINNNNNNNSDDGSNNNSYEGGGDVLLLSDLNGNNQLGGNDNGNVVNLNNNFQLLNSLDLNSDIQTQPHRKWYLGAISQLPPHEIMGEIYRALKKVGFEWKLTGPYQLRCRMVNGKPIKLVLQLFRVAENRYLLDIKKIEGEIFIFFDICSLMLEELNL</sequence>
<protein>
    <recommendedName>
        <fullName>5'-AMP-activated serine/threonine-protein kinase catalytic subunit alpha</fullName>
        <shortName>AMPKA</shortName>
        <ecNumber>2.7.11.1</ecNumber>
    </recommendedName>
    <alternativeName>
        <fullName>Protein kinase, AMP-activated, alpha subunit</fullName>
    </alternativeName>
    <alternativeName>
        <fullName>SNF1/AMP-activated kinase catalytic subunit</fullName>
    </alternativeName>
    <alternativeName>
        <fullName>Sucrose non-fermenting protein snfA</fullName>
    </alternativeName>
</protein>
<gene>
    <name type="primary">snfA</name>
    <name type="synonym">ampka</name>
    <name type="synonym">prkaa</name>
    <name type="ORF">DDB_G0277905</name>
</gene>
<keyword id="KW-0067">ATP-binding</keyword>
<keyword id="KW-0418">Kinase</keyword>
<keyword id="KW-0547">Nucleotide-binding</keyword>
<keyword id="KW-0597">Phosphoprotein</keyword>
<keyword id="KW-1185">Reference proteome</keyword>
<keyword id="KW-0723">Serine/threonine-protein kinase</keyword>
<keyword id="KW-0808">Transferase</keyword>
<name>AMPKA_DICDI</name>